<protein>
    <recommendedName>
        <fullName evidence="1">Protein nucleotidyltransferase YdiU</fullName>
        <ecNumber evidence="1">2.7.7.-</ecNumber>
    </recommendedName>
    <alternativeName>
        <fullName evidence="1">Protein adenylyltransferase YdiU</fullName>
        <ecNumber evidence="1">2.7.7.108</ecNumber>
    </alternativeName>
    <alternativeName>
        <fullName evidence="1">Protein uridylyltransferase YdiU</fullName>
        <ecNumber evidence="1">2.7.7.-</ecNumber>
    </alternativeName>
</protein>
<dbReference type="EC" id="2.7.7.-" evidence="1"/>
<dbReference type="EC" id="2.7.7.108" evidence="1"/>
<dbReference type="EMBL" id="BA000004">
    <property type="protein sequence ID" value="BAB07658.1"/>
    <property type="molecule type" value="Genomic_DNA"/>
</dbReference>
<dbReference type="PIR" id="C84142">
    <property type="entry name" value="C84142"/>
</dbReference>
<dbReference type="RefSeq" id="WP_010900064.1">
    <property type="nucleotide sequence ID" value="NC_002570.2"/>
</dbReference>
<dbReference type="SMR" id="Q9K5Z6"/>
<dbReference type="STRING" id="272558.gene:10729852"/>
<dbReference type="KEGG" id="bha:BH3939"/>
<dbReference type="eggNOG" id="COG0397">
    <property type="taxonomic scope" value="Bacteria"/>
</dbReference>
<dbReference type="HOGENOM" id="CLU_010245_4_1_9"/>
<dbReference type="OrthoDB" id="9773505at2"/>
<dbReference type="Proteomes" id="UP000001258">
    <property type="component" value="Chromosome"/>
</dbReference>
<dbReference type="GO" id="GO:0070733">
    <property type="term" value="F:AMPylase activity"/>
    <property type="evidence" value="ECO:0007669"/>
    <property type="project" value="RHEA"/>
</dbReference>
<dbReference type="GO" id="GO:0005524">
    <property type="term" value="F:ATP binding"/>
    <property type="evidence" value="ECO:0007669"/>
    <property type="project" value="UniProtKB-UniRule"/>
</dbReference>
<dbReference type="GO" id="GO:0000287">
    <property type="term" value="F:magnesium ion binding"/>
    <property type="evidence" value="ECO:0007669"/>
    <property type="project" value="UniProtKB-UniRule"/>
</dbReference>
<dbReference type="HAMAP" id="MF_00692">
    <property type="entry name" value="YdiU_SelO"/>
    <property type="match status" value="1"/>
</dbReference>
<dbReference type="InterPro" id="IPR003846">
    <property type="entry name" value="SelO"/>
</dbReference>
<dbReference type="NCBIfam" id="NF000658">
    <property type="entry name" value="PRK00029.1"/>
    <property type="match status" value="1"/>
</dbReference>
<dbReference type="PANTHER" id="PTHR12153:SF15">
    <property type="entry name" value="PROTEIN ADENYLYLTRANSFERASE SELO, MITOCHONDRIAL"/>
    <property type="match status" value="1"/>
</dbReference>
<dbReference type="PANTHER" id="PTHR12153">
    <property type="entry name" value="SELENOPROTEIN O"/>
    <property type="match status" value="1"/>
</dbReference>
<dbReference type="Pfam" id="PF02696">
    <property type="entry name" value="SelO"/>
    <property type="match status" value="1"/>
</dbReference>
<reference key="1">
    <citation type="journal article" date="2000" name="Nucleic Acids Res.">
        <title>Complete genome sequence of the alkaliphilic bacterium Bacillus halodurans and genomic sequence comparison with Bacillus subtilis.</title>
        <authorList>
            <person name="Takami H."/>
            <person name="Nakasone K."/>
            <person name="Takaki Y."/>
            <person name="Maeno G."/>
            <person name="Sasaki R."/>
            <person name="Masui N."/>
            <person name="Fuji F."/>
            <person name="Hirama C."/>
            <person name="Nakamura Y."/>
            <person name="Ogasawara N."/>
            <person name="Kuhara S."/>
            <person name="Horikoshi K."/>
        </authorList>
    </citation>
    <scope>NUCLEOTIDE SEQUENCE [LARGE SCALE GENOMIC DNA]</scope>
    <source>
        <strain>ATCC BAA-125 / DSM 18197 / FERM 7344 / JCM 9153 / C-125</strain>
    </source>
</reference>
<comment type="function">
    <text evidence="1">Nucleotidyltransferase involved in the post-translational modification of proteins. It can catalyze the addition of adenosine monophosphate (AMP) or uridine monophosphate (UMP) to a protein, resulting in modifications known as AMPylation and UMPylation.</text>
</comment>
<comment type="catalytic activity">
    <reaction evidence="1">
        <text>L-seryl-[protein] + ATP = 3-O-(5'-adenylyl)-L-seryl-[protein] + diphosphate</text>
        <dbReference type="Rhea" id="RHEA:58120"/>
        <dbReference type="Rhea" id="RHEA-COMP:9863"/>
        <dbReference type="Rhea" id="RHEA-COMP:15073"/>
        <dbReference type="ChEBI" id="CHEBI:29999"/>
        <dbReference type="ChEBI" id="CHEBI:30616"/>
        <dbReference type="ChEBI" id="CHEBI:33019"/>
        <dbReference type="ChEBI" id="CHEBI:142516"/>
        <dbReference type="EC" id="2.7.7.108"/>
    </reaction>
</comment>
<comment type="catalytic activity">
    <reaction evidence="1">
        <text>L-threonyl-[protein] + ATP = 3-O-(5'-adenylyl)-L-threonyl-[protein] + diphosphate</text>
        <dbReference type="Rhea" id="RHEA:54292"/>
        <dbReference type="Rhea" id="RHEA-COMP:11060"/>
        <dbReference type="Rhea" id="RHEA-COMP:13847"/>
        <dbReference type="ChEBI" id="CHEBI:30013"/>
        <dbReference type="ChEBI" id="CHEBI:30616"/>
        <dbReference type="ChEBI" id="CHEBI:33019"/>
        <dbReference type="ChEBI" id="CHEBI:138113"/>
        <dbReference type="EC" id="2.7.7.108"/>
    </reaction>
</comment>
<comment type="catalytic activity">
    <reaction evidence="1">
        <text>L-tyrosyl-[protein] + ATP = O-(5'-adenylyl)-L-tyrosyl-[protein] + diphosphate</text>
        <dbReference type="Rhea" id="RHEA:54288"/>
        <dbReference type="Rhea" id="RHEA-COMP:10136"/>
        <dbReference type="Rhea" id="RHEA-COMP:13846"/>
        <dbReference type="ChEBI" id="CHEBI:30616"/>
        <dbReference type="ChEBI" id="CHEBI:33019"/>
        <dbReference type="ChEBI" id="CHEBI:46858"/>
        <dbReference type="ChEBI" id="CHEBI:83624"/>
        <dbReference type="EC" id="2.7.7.108"/>
    </reaction>
</comment>
<comment type="catalytic activity">
    <reaction evidence="1">
        <text>L-histidyl-[protein] + UTP = N(tele)-(5'-uridylyl)-L-histidyl-[protein] + diphosphate</text>
        <dbReference type="Rhea" id="RHEA:83891"/>
        <dbReference type="Rhea" id="RHEA-COMP:9745"/>
        <dbReference type="Rhea" id="RHEA-COMP:20239"/>
        <dbReference type="ChEBI" id="CHEBI:29979"/>
        <dbReference type="ChEBI" id="CHEBI:33019"/>
        <dbReference type="ChEBI" id="CHEBI:46398"/>
        <dbReference type="ChEBI" id="CHEBI:233474"/>
    </reaction>
</comment>
<comment type="catalytic activity">
    <reaction evidence="1">
        <text>L-seryl-[protein] + UTP = O-(5'-uridylyl)-L-seryl-[protein] + diphosphate</text>
        <dbReference type="Rhea" id="RHEA:64604"/>
        <dbReference type="Rhea" id="RHEA-COMP:9863"/>
        <dbReference type="Rhea" id="RHEA-COMP:16635"/>
        <dbReference type="ChEBI" id="CHEBI:29999"/>
        <dbReference type="ChEBI" id="CHEBI:33019"/>
        <dbReference type="ChEBI" id="CHEBI:46398"/>
        <dbReference type="ChEBI" id="CHEBI:156051"/>
    </reaction>
</comment>
<comment type="catalytic activity">
    <reaction evidence="1">
        <text>L-tyrosyl-[protein] + UTP = O-(5'-uridylyl)-L-tyrosyl-[protein] + diphosphate</text>
        <dbReference type="Rhea" id="RHEA:83887"/>
        <dbReference type="Rhea" id="RHEA-COMP:10136"/>
        <dbReference type="Rhea" id="RHEA-COMP:20238"/>
        <dbReference type="ChEBI" id="CHEBI:33019"/>
        <dbReference type="ChEBI" id="CHEBI:46398"/>
        <dbReference type="ChEBI" id="CHEBI:46858"/>
        <dbReference type="ChEBI" id="CHEBI:90602"/>
    </reaction>
</comment>
<comment type="cofactor">
    <cofactor evidence="1">
        <name>Mg(2+)</name>
        <dbReference type="ChEBI" id="CHEBI:18420"/>
    </cofactor>
    <cofactor evidence="1">
        <name>Mn(2+)</name>
        <dbReference type="ChEBI" id="CHEBI:29035"/>
    </cofactor>
</comment>
<comment type="similarity">
    <text evidence="1">Belongs to the SELO family.</text>
</comment>
<name>SELO_HALH5</name>
<gene>
    <name evidence="1" type="primary">ydiU</name>
    <name evidence="1" type="synonym">selO</name>
    <name type="ordered locus">BH3939</name>
</gene>
<feature type="chain" id="PRO_0000121407" description="Protein nucleotidyltransferase YdiU">
    <location>
        <begin position="1"/>
        <end position="492"/>
    </location>
</feature>
<feature type="active site" description="Proton acceptor" evidence="1">
    <location>
        <position position="257"/>
    </location>
</feature>
<feature type="binding site" evidence="1">
    <location>
        <position position="94"/>
    </location>
    <ligand>
        <name>ATP</name>
        <dbReference type="ChEBI" id="CHEBI:30616"/>
    </ligand>
</feature>
<feature type="binding site" evidence="1">
    <location>
        <position position="96"/>
    </location>
    <ligand>
        <name>ATP</name>
        <dbReference type="ChEBI" id="CHEBI:30616"/>
    </ligand>
</feature>
<feature type="binding site" evidence="1">
    <location>
        <position position="97"/>
    </location>
    <ligand>
        <name>ATP</name>
        <dbReference type="ChEBI" id="CHEBI:30616"/>
    </ligand>
</feature>
<feature type="binding site" evidence="1">
    <location>
        <position position="117"/>
    </location>
    <ligand>
        <name>ATP</name>
        <dbReference type="ChEBI" id="CHEBI:30616"/>
    </ligand>
</feature>
<feature type="binding site" evidence="1">
    <location>
        <position position="129"/>
    </location>
    <ligand>
        <name>ATP</name>
        <dbReference type="ChEBI" id="CHEBI:30616"/>
    </ligand>
</feature>
<feature type="binding site" evidence="1">
    <location>
        <position position="130"/>
    </location>
    <ligand>
        <name>ATP</name>
        <dbReference type="ChEBI" id="CHEBI:30616"/>
    </ligand>
</feature>
<feature type="binding site" evidence="1">
    <location>
        <position position="180"/>
    </location>
    <ligand>
        <name>ATP</name>
        <dbReference type="ChEBI" id="CHEBI:30616"/>
    </ligand>
</feature>
<feature type="binding site" evidence="1">
    <location>
        <position position="187"/>
    </location>
    <ligand>
        <name>ATP</name>
        <dbReference type="ChEBI" id="CHEBI:30616"/>
    </ligand>
</feature>
<feature type="binding site" evidence="1">
    <location>
        <position position="258"/>
    </location>
    <ligand>
        <name>Mg(2+)</name>
        <dbReference type="ChEBI" id="CHEBI:18420"/>
    </ligand>
</feature>
<feature type="binding site" evidence="1">
    <location>
        <position position="267"/>
    </location>
    <ligand>
        <name>ATP</name>
        <dbReference type="ChEBI" id="CHEBI:30616"/>
    </ligand>
</feature>
<feature type="binding site" evidence="1">
    <location>
        <position position="267"/>
    </location>
    <ligand>
        <name>Mg(2+)</name>
        <dbReference type="ChEBI" id="CHEBI:18420"/>
    </ligand>
</feature>
<sequence length="492" mass="55013">MTENKGTPEVGWSFDTRYTDLPSMMFSNVEPEPVEAPKLVILNDSLAQSLGLDPVALQHQNSIAVLAGNEVPKGAAPLAQAYAGHQFGHFTMLGDGRAILLGEQITPNGERFDIQLKGSGRTPYSRQGDGRAALGPMLREYIISEAMHALGIPTTRSLAVVTTGESVFRETVLPGAILTRVAASHIRVGTFQFVANAGSEEELKALADYTLARHFPEVEADRENRYLALLQKVIKRQAELIAKWQLVGFIHGVMNTDNMTISGETIDYGPCAFMDVYDPETVFSSIDTRGRYAYGNQPRIGAWNLARFAEALLPLLADDQDEAIKLAEAEISNYAEQFEHHWLNGMRAKLGLFNEESEDLSLIKDLLEVMHKHKADFTNTFRALTFDEQEETGLHDKLEFTEWHERWQARLGRQEQTKDDSHNLMKMSNPAVIPRNHRVEEALEAAVEQEDYQVMERLLKVLANPFAHSPEQKAYAKLPAPCAIPYRTYCGT</sequence>
<proteinExistence type="inferred from homology"/>
<organism>
    <name type="scientific">Halalkalibacterium halodurans (strain ATCC BAA-125 / DSM 18197 / FERM 7344 / JCM 9153 / C-125)</name>
    <name type="common">Bacillus halodurans</name>
    <dbReference type="NCBI Taxonomy" id="272558"/>
    <lineage>
        <taxon>Bacteria</taxon>
        <taxon>Bacillati</taxon>
        <taxon>Bacillota</taxon>
        <taxon>Bacilli</taxon>
        <taxon>Bacillales</taxon>
        <taxon>Bacillaceae</taxon>
        <taxon>Halalkalibacterium (ex Joshi et al. 2022)</taxon>
    </lineage>
</organism>
<evidence type="ECO:0000255" key="1">
    <source>
        <dbReference type="HAMAP-Rule" id="MF_00692"/>
    </source>
</evidence>
<keyword id="KW-0067">ATP-binding</keyword>
<keyword id="KW-0460">Magnesium</keyword>
<keyword id="KW-0464">Manganese</keyword>
<keyword id="KW-0479">Metal-binding</keyword>
<keyword id="KW-0547">Nucleotide-binding</keyword>
<keyword id="KW-0548">Nucleotidyltransferase</keyword>
<keyword id="KW-1185">Reference proteome</keyword>
<keyword id="KW-0808">Transferase</keyword>
<accession>Q9K5Z6</accession>